<dbReference type="EC" id="2.8.4.4" evidence="1"/>
<dbReference type="EMBL" id="CP001055">
    <property type="protein sequence ID" value="ACC97818.1"/>
    <property type="molecule type" value="Genomic_DNA"/>
</dbReference>
<dbReference type="RefSeq" id="WP_012414433.1">
    <property type="nucleotide sequence ID" value="NC_010644.1"/>
</dbReference>
<dbReference type="SMR" id="B2KB59"/>
<dbReference type="STRING" id="445932.Emin_0256"/>
<dbReference type="KEGG" id="emi:Emin_0256"/>
<dbReference type="HOGENOM" id="CLU_018697_0_1_0"/>
<dbReference type="OrthoDB" id="9805215at2"/>
<dbReference type="Proteomes" id="UP000001029">
    <property type="component" value="Chromosome"/>
</dbReference>
<dbReference type="GO" id="GO:0005829">
    <property type="term" value="C:cytosol"/>
    <property type="evidence" value="ECO:0007669"/>
    <property type="project" value="TreeGrafter"/>
</dbReference>
<dbReference type="GO" id="GO:0051539">
    <property type="term" value="F:4 iron, 4 sulfur cluster binding"/>
    <property type="evidence" value="ECO:0007669"/>
    <property type="project" value="UniProtKB-UniRule"/>
</dbReference>
<dbReference type="GO" id="GO:0035599">
    <property type="term" value="F:aspartic acid methylthiotransferase activity"/>
    <property type="evidence" value="ECO:0007669"/>
    <property type="project" value="TreeGrafter"/>
</dbReference>
<dbReference type="GO" id="GO:0046872">
    <property type="term" value="F:metal ion binding"/>
    <property type="evidence" value="ECO:0007669"/>
    <property type="project" value="UniProtKB-KW"/>
</dbReference>
<dbReference type="GO" id="GO:0103039">
    <property type="term" value="F:protein methylthiotransferase activity"/>
    <property type="evidence" value="ECO:0007669"/>
    <property type="project" value="UniProtKB-EC"/>
</dbReference>
<dbReference type="GO" id="GO:0006400">
    <property type="term" value="P:tRNA modification"/>
    <property type="evidence" value="ECO:0007669"/>
    <property type="project" value="InterPro"/>
</dbReference>
<dbReference type="CDD" id="cd01335">
    <property type="entry name" value="Radical_SAM"/>
    <property type="match status" value="1"/>
</dbReference>
<dbReference type="FunFam" id="3.80.30.20:FF:000001">
    <property type="entry name" value="tRNA-2-methylthio-N(6)-dimethylallyladenosine synthase 2"/>
    <property type="match status" value="1"/>
</dbReference>
<dbReference type="Gene3D" id="3.40.50.12160">
    <property type="entry name" value="Methylthiotransferase, N-terminal domain"/>
    <property type="match status" value="1"/>
</dbReference>
<dbReference type="Gene3D" id="2.40.50.140">
    <property type="entry name" value="Nucleic acid-binding proteins"/>
    <property type="match status" value="1"/>
</dbReference>
<dbReference type="Gene3D" id="3.80.30.20">
    <property type="entry name" value="tm_1862 like domain"/>
    <property type="match status" value="1"/>
</dbReference>
<dbReference type="HAMAP" id="MF_01865">
    <property type="entry name" value="MTTase_RimO"/>
    <property type="match status" value="1"/>
</dbReference>
<dbReference type="InterPro" id="IPR006638">
    <property type="entry name" value="Elp3/MiaA/NifB-like_rSAM"/>
</dbReference>
<dbReference type="InterPro" id="IPR005839">
    <property type="entry name" value="Methylthiotransferase"/>
</dbReference>
<dbReference type="InterPro" id="IPR020612">
    <property type="entry name" value="Methylthiotransferase_CS"/>
</dbReference>
<dbReference type="InterPro" id="IPR013848">
    <property type="entry name" value="Methylthiotransferase_N"/>
</dbReference>
<dbReference type="InterPro" id="IPR038135">
    <property type="entry name" value="Methylthiotransferase_N_sf"/>
</dbReference>
<dbReference type="InterPro" id="IPR012340">
    <property type="entry name" value="NA-bd_OB-fold"/>
</dbReference>
<dbReference type="InterPro" id="IPR005840">
    <property type="entry name" value="Ribosomal_uS12_MeSTrfase_RimO"/>
</dbReference>
<dbReference type="InterPro" id="IPR007197">
    <property type="entry name" value="rSAM"/>
</dbReference>
<dbReference type="InterPro" id="IPR023404">
    <property type="entry name" value="rSAM_horseshoe"/>
</dbReference>
<dbReference type="InterPro" id="IPR002792">
    <property type="entry name" value="TRAM_dom"/>
</dbReference>
<dbReference type="NCBIfam" id="TIGR01125">
    <property type="entry name" value="30S ribosomal protein S12 methylthiotransferase RimO"/>
    <property type="match status" value="1"/>
</dbReference>
<dbReference type="NCBIfam" id="TIGR00089">
    <property type="entry name" value="MiaB/RimO family radical SAM methylthiotransferase"/>
    <property type="match status" value="1"/>
</dbReference>
<dbReference type="PANTHER" id="PTHR43837">
    <property type="entry name" value="RIBOSOMAL PROTEIN S12 METHYLTHIOTRANSFERASE RIMO"/>
    <property type="match status" value="1"/>
</dbReference>
<dbReference type="PANTHER" id="PTHR43837:SF1">
    <property type="entry name" value="RIBOSOMAL PROTEIN US12 METHYLTHIOTRANSFERASE RIMO"/>
    <property type="match status" value="1"/>
</dbReference>
<dbReference type="Pfam" id="PF04055">
    <property type="entry name" value="Radical_SAM"/>
    <property type="match status" value="1"/>
</dbReference>
<dbReference type="Pfam" id="PF18693">
    <property type="entry name" value="TRAM_2"/>
    <property type="match status" value="1"/>
</dbReference>
<dbReference type="Pfam" id="PF00919">
    <property type="entry name" value="UPF0004"/>
    <property type="match status" value="1"/>
</dbReference>
<dbReference type="SFLD" id="SFLDG01082">
    <property type="entry name" value="B12-binding_domain_containing"/>
    <property type="match status" value="1"/>
</dbReference>
<dbReference type="SFLD" id="SFLDS00029">
    <property type="entry name" value="Radical_SAM"/>
    <property type="match status" value="1"/>
</dbReference>
<dbReference type="SFLD" id="SFLDF00274">
    <property type="entry name" value="ribosomal_protein_S12_methylth"/>
    <property type="match status" value="1"/>
</dbReference>
<dbReference type="SMART" id="SM00729">
    <property type="entry name" value="Elp3"/>
    <property type="match status" value="1"/>
</dbReference>
<dbReference type="SUPFAM" id="SSF102114">
    <property type="entry name" value="Radical SAM enzymes"/>
    <property type="match status" value="1"/>
</dbReference>
<dbReference type="PROSITE" id="PS51449">
    <property type="entry name" value="MTTASE_N"/>
    <property type="match status" value="1"/>
</dbReference>
<dbReference type="PROSITE" id="PS01278">
    <property type="entry name" value="MTTASE_RADICAL"/>
    <property type="match status" value="1"/>
</dbReference>
<dbReference type="PROSITE" id="PS51918">
    <property type="entry name" value="RADICAL_SAM"/>
    <property type="match status" value="1"/>
</dbReference>
<dbReference type="PROSITE" id="PS50926">
    <property type="entry name" value="TRAM"/>
    <property type="match status" value="1"/>
</dbReference>
<keyword id="KW-0004">4Fe-4S</keyword>
<keyword id="KW-0963">Cytoplasm</keyword>
<keyword id="KW-0408">Iron</keyword>
<keyword id="KW-0411">Iron-sulfur</keyword>
<keyword id="KW-0479">Metal-binding</keyword>
<keyword id="KW-1185">Reference proteome</keyword>
<keyword id="KW-0949">S-adenosyl-L-methionine</keyword>
<keyword id="KW-0808">Transferase</keyword>
<comment type="function">
    <text evidence="1">Catalyzes the methylthiolation of an aspartic acid residue of ribosomal protein uS12.</text>
</comment>
<comment type="catalytic activity">
    <reaction evidence="1">
        <text>L-aspartate(89)-[ribosomal protein uS12]-hydrogen + (sulfur carrier)-SH + AH2 + 2 S-adenosyl-L-methionine = 3-methylsulfanyl-L-aspartate(89)-[ribosomal protein uS12]-hydrogen + (sulfur carrier)-H + 5'-deoxyadenosine + L-methionine + A + S-adenosyl-L-homocysteine + 2 H(+)</text>
        <dbReference type="Rhea" id="RHEA:37087"/>
        <dbReference type="Rhea" id="RHEA-COMP:10460"/>
        <dbReference type="Rhea" id="RHEA-COMP:10461"/>
        <dbReference type="Rhea" id="RHEA-COMP:14737"/>
        <dbReference type="Rhea" id="RHEA-COMP:14739"/>
        <dbReference type="ChEBI" id="CHEBI:13193"/>
        <dbReference type="ChEBI" id="CHEBI:15378"/>
        <dbReference type="ChEBI" id="CHEBI:17319"/>
        <dbReference type="ChEBI" id="CHEBI:17499"/>
        <dbReference type="ChEBI" id="CHEBI:29917"/>
        <dbReference type="ChEBI" id="CHEBI:29961"/>
        <dbReference type="ChEBI" id="CHEBI:57844"/>
        <dbReference type="ChEBI" id="CHEBI:57856"/>
        <dbReference type="ChEBI" id="CHEBI:59789"/>
        <dbReference type="ChEBI" id="CHEBI:64428"/>
        <dbReference type="ChEBI" id="CHEBI:73599"/>
        <dbReference type="EC" id="2.8.4.4"/>
    </reaction>
</comment>
<comment type="cofactor">
    <cofactor evidence="1">
        <name>[4Fe-4S] cluster</name>
        <dbReference type="ChEBI" id="CHEBI:49883"/>
    </cofactor>
    <text evidence="1">Binds 2 [4Fe-4S] clusters. One cluster is coordinated with 3 cysteines and an exchangeable S-adenosyl-L-methionine.</text>
</comment>
<comment type="subcellular location">
    <subcellularLocation>
        <location evidence="1">Cytoplasm</location>
    </subcellularLocation>
</comment>
<comment type="similarity">
    <text evidence="1">Belongs to the methylthiotransferase family. RimO subfamily.</text>
</comment>
<sequence>MAKIFTISLGCSKNLTDTEEMLGILNHKKHYLVADESEADTILINTCAFIKPAREEADREIKRASKLKAQGKIEKLIVAGCLTQKEGKSLPSKYPLVDAFIGLKGIEKIDNVIKRPKHSFCPAPDYIKAPDFKLQLTAPHSAYLKVADGCNNRCAYCTIPAIRGPFRSKSMEDIVAEAKAMEKNGVKEISLIAQDTTAYGQDIFGKPSLVKLLKKLVKIKGIEWFRIMYAYPETVTKDLLDFIACEPKICRYLDMPLQHISAPVLKAMNRRSTEDEVRAKIKLIRQIVPGMSLRTNFIAGFPGETAEDFEKLKKFIAEAKFNNVGVFAYSKEDGTPAAVMKRQVAEKIKKQRVEELVSAQSRVIDSINRKLKGKTVKVLLDNLFCGRSESDSPDIDGRVEVKGNKKYKAGDFVKVKITSAKGYNRTGKII</sequence>
<protein>
    <recommendedName>
        <fullName evidence="1">Ribosomal protein uS12 methylthiotransferase RimO</fullName>
        <shortName evidence="1">uS12 MTTase</shortName>
        <shortName evidence="1">uS12 methylthiotransferase</shortName>
        <ecNumber evidence="1">2.8.4.4</ecNumber>
    </recommendedName>
    <alternativeName>
        <fullName evidence="1">Ribosomal protein uS12 (aspartate-C(3))-methylthiotransferase</fullName>
    </alternativeName>
    <alternativeName>
        <fullName evidence="1">Ribosome maturation factor RimO</fullName>
    </alternativeName>
</protein>
<reference key="1">
    <citation type="journal article" date="2009" name="Appl. Environ. Microbiol.">
        <title>Genomic analysis of 'Elusimicrobium minutum,' the first cultivated representative of the phylum 'Elusimicrobia' (formerly termite group 1).</title>
        <authorList>
            <person name="Herlemann D.P.R."/>
            <person name="Geissinger O."/>
            <person name="Ikeda-Ohtsubo W."/>
            <person name="Kunin V."/>
            <person name="Sun H."/>
            <person name="Lapidus A."/>
            <person name="Hugenholtz P."/>
            <person name="Brune A."/>
        </authorList>
    </citation>
    <scope>NUCLEOTIDE SEQUENCE [LARGE SCALE GENOMIC DNA]</scope>
    <source>
        <strain>Pei191</strain>
    </source>
</reference>
<organism>
    <name type="scientific">Elusimicrobium minutum (strain Pei191)</name>
    <dbReference type="NCBI Taxonomy" id="445932"/>
    <lineage>
        <taxon>Bacteria</taxon>
        <taxon>Pseudomonadati</taxon>
        <taxon>Elusimicrobiota</taxon>
        <taxon>Elusimicrobia</taxon>
        <taxon>Elusimicrobiales</taxon>
        <taxon>Elusimicrobiaceae</taxon>
        <taxon>Elusimicrobium</taxon>
    </lineage>
</organism>
<name>RIMO_ELUMP</name>
<accession>B2KB59</accession>
<proteinExistence type="inferred from homology"/>
<evidence type="ECO:0000255" key="1">
    <source>
        <dbReference type="HAMAP-Rule" id="MF_01865"/>
    </source>
</evidence>
<evidence type="ECO:0000255" key="2">
    <source>
        <dbReference type="PROSITE-ProRule" id="PRU01266"/>
    </source>
</evidence>
<gene>
    <name evidence="1" type="primary">rimO</name>
    <name type="ordered locus">Emin_0256</name>
</gene>
<feature type="chain" id="PRO_0000374812" description="Ribosomal protein uS12 methylthiotransferase RimO">
    <location>
        <begin position="1"/>
        <end position="430"/>
    </location>
</feature>
<feature type="domain" description="MTTase N-terminal" evidence="1">
    <location>
        <begin position="2"/>
        <end position="118"/>
    </location>
</feature>
<feature type="domain" description="Radical SAM core" evidence="2">
    <location>
        <begin position="136"/>
        <end position="368"/>
    </location>
</feature>
<feature type="domain" description="TRAM" evidence="1">
    <location>
        <begin position="369"/>
        <end position="430"/>
    </location>
</feature>
<feature type="binding site" evidence="1">
    <location>
        <position position="11"/>
    </location>
    <ligand>
        <name>[4Fe-4S] cluster</name>
        <dbReference type="ChEBI" id="CHEBI:49883"/>
        <label>1</label>
    </ligand>
</feature>
<feature type="binding site" evidence="1">
    <location>
        <position position="47"/>
    </location>
    <ligand>
        <name>[4Fe-4S] cluster</name>
        <dbReference type="ChEBI" id="CHEBI:49883"/>
        <label>1</label>
    </ligand>
</feature>
<feature type="binding site" evidence="1">
    <location>
        <position position="81"/>
    </location>
    <ligand>
        <name>[4Fe-4S] cluster</name>
        <dbReference type="ChEBI" id="CHEBI:49883"/>
        <label>1</label>
    </ligand>
</feature>
<feature type="binding site" evidence="1">
    <location>
        <position position="150"/>
    </location>
    <ligand>
        <name>[4Fe-4S] cluster</name>
        <dbReference type="ChEBI" id="CHEBI:49883"/>
        <label>2</label>
        <note>4Fe-4S-S-AdoMet</note>
    </ligand>
</feature>
<feature type="binding site" evidence="1">
    <location>
        <position position="154"/>
    </location>
    <ligand>
        <name>[4Fe-4S] cluster</name>
        <dbReference type="ChEBI" id="CHEBI:49883"/>
        <label>2</label>
        <note>4Fe-4S-S-AdoMet</note>
    </ligand>
</feature>
<feature type="binding site" evidence="1">
    <location>
        <position position="157"/>
    </location>
    <ligand>
        <name>[4Fe-4S] cluster</name>
        <dbReference type="ChEBI" id="CHEBI:49883"/>
        <label>2</label>
        <note>4Fe-4S-S-AdoMet</note>
    </ligand>
</feature>